<comment type="function">
    <text evidence="1">This protein is one of the early assembly proteins of the 50S ribosomal subunit, although it is not seen to bind rRNA by itself. It is important during the early stages of 50S assembly.</text>
</comment>
<comment type="subunit">
    <text evidence="1">Part of the 50S ribosomal subunit.</text>
</comment>
<comment type="similarity">
    <text evidence="1">Belongs to the universal ribosomal protein uL13 family.</text>
</comment>
<protein>
    <recommendedName>
        <fullName evidence="1">Large ribosomal subunit protein uL13</fullName>
    </recommendedName>
    <alternativeName>
        <fullName evidence="2">50S ribosomal protein L13</fullName>
    </alternativeName>
</protein>
<accession>A0ALT3</accession>
<reference key="1">
    <citation type="journal article" date="2006" name="J. Bacteriol.">
        <title>Whole-genome sequence of Listeria welshimeri reveals common steps in genome reduction with Listeria innocua as compared to Listeria monocytogenes.</title>
        <authorList>
            <person name="Hain T."/>
            <person name="Steinweg C."/>
            <person name="Kuenne C.T."/>
            <person name="Billion A."/>
            <person name="Ghai R."/>
            <person name="Chatterjee S.S."/>
            <person name="Domann E."/>
            <person name="Kaerst U."/>
            <person name="Goesmann A."/>
            <person name="Bekel T."/>
            <person name="Bartels D."/>
            <person name="Kaiser O."/>
            <person name="Meyer F."/>
            <person name="Puehler A."/>
            <person name="Weisshaar B."/>
            <person name="Wehland J."/>
            <person name="Liang C."/>
            <person name="Dandekar T."/>
            <person name="Lampidis R."/>
            <person name="Kreft J."/>
            <person name="Goebel W."/>
            <person name="Chakraborty T."/>
        </authorList>
    </citation>
    <scope>NUCLEOTIDE SEQUENCE [LARGE SCALE GENOMIC DNA]</scope>
    <source>
        <strain>ATCC 35897 / DSM 20650 / CCUG 15529 / CIP 8149 / NCTC 11857 / SLCC 5334 / V8</strain>
    </source>
</reference>
<gene>
    <name evidence="1" type="primary">rplM</name>
    <name type="ordered locus">lwe2547</name>
</gene>
<proteinExistence type="inferred from homology"/>
<name>RL13_LISW6</name>
<feature type="chain" id="PRO_1000055403" description="Large ribosomal subunit protein uL13">
    <location>
        <begin position="1"/>
        <end position="145"/>
    </location>
</feature>
<keyword id="KW-0687">Ribonucleoprotein</keyword>
<keyword id="KW-0689">Ribosomal protein</keyword>
<organism>
    <name type="scientific">Listeria welshimeri serovar 6b (strain ATCC 35897 / DSM 20650 / CCUG 15529 / CIP 8149 / NCTC 11857 / SLCC 5334 / V8)</name>
    <dbReference type="NCBI Taxonomy" id="386043"/>
    <lineage>
        <taxon>Bacteria</taxon>
        <taxon>Bacillati</taxon>
        <taxon>Bacillota</taxon>
        <taxon>Bacilli</taxon>
        <taxon>Bacillales</taxon>
        <taxon>Listeriaceae</taxon>
        <taxon>Listeria</taxon>
    </lineage>
</organism>
<dbReference type="EMBL" id="AM263198">
    <property type="protein sequence ID" value="CAK21965.1"/>
    <property type="molecule type" value="Genomic_DNA"/>
</dbReference>
<dbReference type="RefSeq" id="WP_003727703.1">
    <property type="nucleotide sequence ID" value="NC_008555.1"/>
</dbReference>
<dbReference type="SMR" id="A0ALT3"/>
<dbReference type="STRING" id="386043.lwe2547"/>
<dbReference type="GeneID" id="61190471"/>
<dbReference type="KEGG" id="lwe:lwe2547"/>
<dbReference type="eggNOG" id="COG0102">
    <property type="taxonomic scope" value="Bacteria"/>
</dbReference>
<dbReference type="HOGENOM" id="CLU_082184_2_2_9"/>
<dbReference type="OrthoDB" id="9801330at2"/>
<dbReference type="Proteomes" id="UP000000779">
    <property type="component" value="Chromosome"/>
</dbReference>
<dbReference type="GO" id="GO:0022625">
    <property type="term" value="C:cytosolic large ribosomal subunit"/>
    <property type="evidence" value="ECO:0007669"/>
    <property type="project" value="TreeGrafter"/>
</dbReference>
<dbReference type="GO" id="GO:0003729">
    <property type="term" value="F:mRNA binding"/>
    <property type="evidence" value="ECO:0007669"/>
    <property type="project" value="TreeGrafter"/>
</dbReference>
<dbReference type="GO" id="GO:0003735">
    <property type="term" value="F:structural constituent of ribosome"/>
    <property type="evidence" value="ECO:0007669"/>
    <property type="project" value="InterPro"/>
</dbReference>
<dbReference type="GO" id="GO:0017148">
    <property type="term" value="P:negative regulation of translation"/>
    <property type="evidence" value="ECO:0007669"/>
    <property type="project" value="TreeGrafter"/>
</dbReference>
<dbReference type="GO" id="GO:0006412">
    <property type="term" value="P:translation"/>
    <property type="evidence" value="ECO:0007669"/>
    <property type="project" value="UniProtKB-UniRule"/>
</dbReference>
<dbReference type="CDD" id="cd00392">
    <property type="entry name" value="Ribosomal_L13"/>
    <property type="match status" value="1"/>
</dbReference>
<dbReference type="FunFam" id="3.90.1180.10:FF:000001">
    <property type="entry name" value="50S ribosomal protein L13"/>
    <property type="match status" value="1"/>
</dbReference>
<dbReference type="Gene3D" id="3.90.1180.10">
    <property type="entry name" value="Ribosomal protein L13"/>
    <property type="match status" value="1"/>
</dbReference>
<dbReference type="HAMAP" id="MF_01366">
    <property type="entry name" value="Ribosomal_uL13"/>
    <property type="match status" value="1"/>
</dbReference>
<dbReference type="InterPro" id="IPR005822">
    <property type="entry name" value="Ribosomal_uL13"/>
</dbReference>
<dbReference type="InterPro" id="IPR005823">
    <property type="entry name" value="Ribosomal_uL13_bac-type"/>
</dbReference>
<dbReference type="InterPro" id="IPR023563">
    <property type="entry name" value="Ribosomal_uL13_CS"/>
</dbReference>
<dbReference type="InterPro" id="IPR036899">
    <property type="entry name" value="Ribosomal_uL13_sf"/>
</dbReference>
<dbReference type="NCBIfam" id="TIGR01066">
    <property type="entry name" value="rplM_bact"/>
    <property type="match status" value="1"/>
</dbReference>
<dbReference type="PANTHER" id="PTHR11545:SF2">
    <property type="entry name" value="LARGE RIBOSOMAL SUBUNIT PROTEIN UL13M"/>
    <property type="match status" value="1"/>
</dbReference>
<dbReference type="PANTHER" id="PTHR11545">
    <property type="entry name" value="RIBOSOMAL PROTEIN L13"/>
    <property type="match status" value="1"/>
</dbReference>
<dbReference type="Pfam" id="PF00572">
    <property type="entry name" value="Ribosomal_L13"/>
    <property type="match status" value="1"/>
</dbReference>
<dbReference type="PIRSF" id="PIRSF002181">
    <property type="entry name" value="Ribosomal_L13"/>
    <property type="match status" value="1"/>
</dbReference>
<dbReference type="SUPFAM" id="SSF52161">
    <property type="entry name" value="Ribosomal protein L13"/>
    <property type="match status" value="1"/>
</dbReference>
<dbReference type="PROSITE" id="PS00783">
    <property type="entry name" value="RIBOSOMAL_L13"/>
    <property type="match status" value="1"/>
</dbReference>
<evidence type="ECO:0000255" key="1">
    <source>
        <dbReference type="HAMAP-Rule" id="MF_01366"/>
    </source>
</evidence>
<evidence type="ECO:0000305" key="2"/>
<sequence length="145" mass="16200">MRTTYMAKPGEVERKWYVIDATGVSLGRLSSEVASILRGKNKPQFTPHIDTGDFVIIINAGKIGLTGKKATDKIYYRHSQYPGGLKSRTAGEMRTNNPEKLLELSIKGMLPKNSLGRQLFKKLHVYGGSEHEHAAQQPEVYELRG</sequence>